<proteinExistence type="inferred from homology"/>
<sequence length="266" mass="30358">MIYSRSRLPSEGEILIATVKQVFDYGSYVTLDEYGGLQAFLPWSEVSSKWVKNIRDVLKENRKVVVKVIRVDRRKGTVDVSLKKVTDDERRKKNLQWKKIQRLDKILELVSQQLKLSEKDAWEQVAWKLEAKYGDPISAIERAVKEGEKILIDAGVPEIWIKPLLEEAAKHTEEKKVKMSGLITVKTSEPLGVQKIKEVMSKALENIEQDYESILNVKIYTIGAPRYRVDVVGTNPKDASEALNQIISNLIKIGKEENVDISVVKK</sequence>
<protein>
    <recommendedName>
        <fullName evidence="1">Translation initiation factor 2 subunit alpha</fullName>
    </recommendedName>
    <alternativeName>
        <fullName evidence="1">aIF2-alpha</fullName>
    </alternativeName>
    <alternativeName>
        <fullName evidence="1">eIF-2-alpha</fullName>
    </alternativeName>
</protein>
<feature type="chain" id="PRO_1000204374" description="Translation initiation factor 2 subunit alpha">
    <location>
        <begin position="1"/>
        <end position="266"/>
    </location>
</feature>
<feature type="domain" description="S1 motif" evidence="1">
    <location>
        <begin position="12"/>
        <end position="83"/>
    </location>
</feature>
<comment type="function">
    <text evidence="1">eIF-2 functions in the early steps of protein synthesis by forming a ternary complex with GTP and initiator tRNA.</text>
</comment>
<comment type="subunit">
    <text evidence="1">Heterotrimer composed of an alpha, a beta and a gamma chain.</text>
</comment>
<comment type="similarity">
    <text evidence="1">Belongs to the eIF-2-alpha family.</text>
</comment>
<gene>
    <name evidence="1" type="primary">eif2a</name>
    <name type="ordered locus">YN1551_1686</name>
</gene>
<accession>C3NI08</accession>
<reference key="1">
    <citation type="journal article" date="2009" name="Proc. Natl. Acad. Sci. U.S.A.">
        <title>Biogeography of the Sulfolobus islandicus pan-genome.</title>
        <authorList>
            <person name="Reno M.L."/>
            <person name="Held N.L."/>
            <person name="Fields C.J."/>
            <person name="Burke P.V."/>
            <person name="Whitaker R.J."/>
        </authorList>
    </citation>
    <scope>NUCLEOTIDE SEQUENCE [LARGE SCALE GENOMIC DNA]</scope>
    <source>
        <strain>Y.N.15.51 / Yellowstone #2</strain>
    </source>
</reference>
<organism>
    <name type="scientific">Saccharolobus islandicus (strain Y.N.15.51 / Yellowstone #2)</name>
    <name type="common">Sulfolobus islandicus</name>
    <dbReference type="NCBI Taxonomy" id="419942"/>
    <lineage>
        <taxon>Archaea</taxon>
        <taxon>Thermoproteota</taxon>
        <taxon>Thermoprotei</taxon>
        <taxon>Sulfolobales</taxon>
        <taxon>Sulfolobaceae</taxon>
        <taxon>Saccharolobus</taxon>
    </lineage>
</organism>
<keyword id="KW-0396">Initiation factor</keyword>
<keyword id="KW-0648">Protein biosynthesis</keyword>
<keyword id="KW-0694">RNA-binding</keyword>
<dbReference type="EMBL" id="CP001404">
    <property type="protein sequence ID" value="ACP48768.1"/>
    <property type="molecule type" value="Genomic_DNA"/>
</dbReference>
<dbReference type="RefSeq" id="WP_012716095.1">
    <property type="nucleotide sequence ID" value="NC_012623.1"/>
</dbReference>
<dbReference type="SMR" id="C3NI08"/>
<dbReference type="GeneID" id="7810644"/>
<dbReference type="KEGG" id="sin:YN1551_1686"/>
<dbReference type="HOGENOM" id="CLU_033458_0_2_2"/>
<dbReference type="Proteomes" id="UP000006818">
    <property type="component" value="Chromosome"/>
</dbReference>
<dbReference type="GO" id="GO:0043022">
    <property type="term" value="F:ribosome binding"/>
    <property type="evidence" value="ECO:0007669"/>
    <property type="project" value="TreeGrafter"/>
</dbReference>
<dbReference type="GO" id="GO:0003723">
    <property type="term" value="F:RNA binding"/>
    <property type="evidence" value="ECO:0007669"/>
    <property type="project" value="UniProtKB-UniRule"/>
</dbReference>
<dbReference type="GO" id="GO:0003743">
    <property type="term" value="F:translation initiation factor activity"/>
    <property type="evidence" value="ECO:0007669"/>
    <property type="project" value="UniProtKB-UniRule"/>
</dbReference>
<dbReference type="CDD" id="cd04452">
    <property type="entry name" value="S1_IF2_alpha"/>
    <property type="match status" value="1"/>
</dbReference>
<dbReference type="FunFam" id="2.40.50.140:FF:000015">
    <property type="entry name" value="Eukaryotic translation initiation factor 2 subunit alpha"/>
    <property type="match status" value="1"/>
</dbReference>
<dbReference type="Gene3D" id="3.30.70.1130">
    <property type="entry name" value="EIF_2_alpha"/>
    <property type="match status" value="1"/>
</dbReference>
<dbReference type="Gene3D" id="2.40.50.140">
    <property type="entry name" value="Nucleic acid-binding proteins"/>
    <property type="match status" value="1"/>
</dbReference>
<dbReference type="Gene3D" id="1.10.150.190">
    <property type="entry name" value="Translation initiation factor 2, subunit 1, domain 2"/>
    <property type="match status" value="1"/>
</dbReference>
<dbReference type="HAMAP" id="MF_00231">
    <property type="entry name" value="eIF_2_alpha"/>
    <property type="match status" value="1"/>
</dbReference>
<dbReference type="InterPro" id="IPR012340">
    <property type="entry name" value="NA-bd_OB-fold"/>
</dbReference>
<dbReference type="InterPro" id="IPR003029">
    <property type="entry name" value="S1_domain"/>
</dbReference>
<dbReference type="InterPro" id="IPR044126">
    <property type="entry name" value="S1_IF2_alpha"/>
</dbReference>
<dbReference type="InterPro" id="IPR022964">
    <property type="entry name" value="TIF2_asu_arc"/>
</dbReference>
<dbReference type="InterPro" id="IPR024055">
    <property type="entry name" value="TIF2_asu_C"/>
</dbReference>
<dbReference type="InterPro" id="IPR024054">
    <property type="entry name" value="TIF2_asu_middle_sf"/>
</dbReference>
<dbReference type="InterPro" id="IPR011488">
    <property type="entry name" value="TIF_2_asu"/>
</dbReference>
<dbReference type="NCBIfam" id="NF003062">
    <property type="entry name" value="PRK03987.1-1"/>
    <property type="match status" value="1"/>
</dbReference>
<dbReference type="PANTHER" id="PTHR10602">
    <property type="entry name" value="EUKARYOTIC TRANSLATION INITIATION FACTOR 2 SUBUNIT 1"/>
    <property type="match status" value="1"/>
</dbReference>
<dbReference type="PANTHER" id="PTHR10602:SF0">
    <property type="entry name" value="EUKARYOTIC TRANSLATION INITIATION FACTOR 2 SUBUNIT 1"/>
    <property type="match status" value="1"/>
</dbReference>
<dbReference type="Pfam" id="PF07541">
    <property type="entry name" value="EIF_2_alpha"/>
    <property type="match status" value="1"/>
</dbReference>
<dbReference type="Pfam" id="PF00575">
    <property type="entry name" value="S1"/>
    <property type="match status" value="1"/>
</dbReference>
<dbReference type="SMART" id="SM00316">
    <property type="entry name" value="S1"/>
    <property type="match status" value="1"/>
</dbReference>
<dbReference type="SUPFAM" id="SSF110993">
    <property type="entry name" value="eIF-2-alpha, C-terminal domain"/>
    <property type="match status" value="1"/>
</dbReference>
<dbReference type="SUPFAM" id="SSF116742">
    <property type="entry name" value="eIF2alpha middle domain-like"/>
    <property type="match status" value="1"/>
</dbReference>
<dbReference type="SUPFAM" id="SSF50249">
    <property type="entry name" value="Nucleic acid-binding proteins"/>
    <property type="match status" value="1"/>
</dbReference>
<dbReference type="PROSITE" id="PS50126">
    <property type="entry name" value="S1"/>
    <property type="match status" value="1"/>
</dbReference>
<evidence type="ECO:0000255" key="1">
    <source>
        <dbReference type="HAMAP-Rule" id="MF_00231"/>
    </source>
</evidence>
<name>IF2A_SACI1</name>